<gene>
    <name evidence="1" type="primary">rpsJ</name>
    <name type="ordered locus">CCNA_01305</name>
</gene>
<protein>
    <recommendedName>
        <fullName evidence="1">Small ribosomal subunit protein uS10</fullName>
    </recommendedName>
    <alternativeName>
        <fullName evidence="2">30S ribosomal protein S10</fullName>
    </alternativeName>
</protein>
<organism>
    <name type="scientific">Caulobacter vibrioides (strain NA1000 / CB15N)</name>
    <name type="common">Caulobacter crescentus</name>
    <dbReference type="NCBI Taxonomy" id="565050"/>
    <lineage>
        <taxon>Bacteria</taxon>
        <taxon>Pseudomonadati</taxon>
        <taxon>Pseudomonadota</taxon>
        <taxon>Alphaproteobacteria</taxon>
        <taxon>Caulobacterales</taxon>
        <taxon>Caulobacteraceae</taxon>
        <taxon>Caulobacter</taxon>
    </lineage>
</organism>
<proteinExistence type="inferred from homology"/>
<name>RS10_CAUVN</name>
<accession>B8H4D3</accession>
<sequence>MDRQNIRIRLKAFDHRVLDHSTREIVNTAKRTGATVRGPIPLPTLIEKFTVNRSPHVDKKSREQFEIRTHKRVLDIVDPTPQTVDALMKLDLSAGVDVEIKL</sequence>
<reference key="1">
    <citation type="journal article" date="2010" name="J. Bacteriol.">
        <title>The genetic basis of laboratory adaptation in Caulobacter crescentus.</title>
        <authorList>
            <person name="Marks M.E."/>
            <person name="Castro-Rojas C.M."/>
            <person name="Teiling C."/>
            <person name="Du L."/>
            <person name="Kapatral V."/>
            <person name="Walunas T.L."/>
            <person name="Crosson S."/>
        </authorList>
    </citation>
    <scope>NUCLEOTIDE SEQUENCE [LARGE SCALE GENOMIC DNA]</scope>
    <source>
        <strain>NA1000 / CB15N</strain>
    </source>
</reference>
<dbReference type="EMBL" id="CP001340">
    <property type="protein sequence ID" value="ACL94770.1"/>
    <property type="molecule type" value="Genomic_DNA"/>
</dbReference>
<dbReference type="RefSeq" id="WP_004616952.1">
    <property type="nucleotide sequence ID" value="NC_011916.1"/>
</dbReference>
<dbReference type="RefSeq" id="YP_002516678.1">
    <property type="nucleotide sequence ID" value="NC_011916.1"/>
</dbReference>
<dbReference type="SMR" id="B8H4D3"/>
<dbReference type="GeneID" id="7333037"/>
<dbReference type="KEGG" id="ccs:CCNA_01305"/>
<dbReference type="PATRIC" id="fig|565050.3.peg.1289"/>
<dbReference type="HOGENOM" id="CLU_122625_1_3_5"/>
<dbReference type="OrthoDB" id="9804464at2"/>
<dbReference type="PhylomeDB" id="B8H4D3"/>
<dbReference type="Proteomes" id="UP000001364">
    <property type="component" value="Chromosome"/>
</dbReference>
<dbReference type="GO" id="GO:1990904">
    <property type="term" value="C:ribonucleoprotein complex"/>
    <property type="evidence" value="ECO:0007669"/>
    <property type="project" value="UniProtKB-KW"/>
</dbReference>
<dbReference type="GO" id="GO:0005840">
    <property type="term" value="C:ribosome"/>
    <property type="evidence" value="ECO:0007669"/>
    <property type="project" value="UniProtKB-KW"/>
</dbReference>
<dbReference type="GO" id="GO:0003735">
    <property type="term" value="F:structural constituent of ribosome"/>
    <property type="evidence" value="ECO:0007669"/>
    <property type="project" value="InterPro"/>
</dbReference>
<dbReference type="GO" id="GO:0000049">
    <property type="term" value="F:tRNA binding"/>
    <property type="evidence" value="ECO:0007669"/>
    <property type="project" value="UniProtKB-UniRule"/>
</dbReference>
<dbReference type="GO" id="GO:0006412">
    <property type="term" value="P:translation"/>
    <property type="evidence" value="ECO:0007669"/>
    <property type="project" value="UniProtKB-UniRule"/>
</dbReference>
<dbReference type="FunFam" id="3.30.70.600:FF:000001">
    <property type="entry name" value="30S ribosomal protein S10"/>
    <property type="match status" value="1"/>
</dbReference>
<dbReference type="Gene3D" id="3.30.70.600">
    <property type="entry name" value="Ribosomal protein S10 domain"/>
    <property type="match status" value="1"/>
</dbReference>
<dbReference type="HAMAP" id="MF_00508">
    <property type="entry name" value="Ribosomal_uS10"/>
    <property type="match status" value="1"/>
</dbReference>
<dbReference type="InterPro" id="IPR001848">
    <property type="entry name" value="Ribosomal_uS10"/>
</dbReference>
<dbReference type="InterPro" id="IPR018268">
    <property type="entry name" value="Ribosomal_uS10_CS"/>
</dbReference>
<dbReference type="InterPro" id="IPR027486">
    <property type="entry name" value="Ribosomal_uS10_dom"/>
</dbReference>
<dbReference type="InterPro" id="IPR036838">
    <property type="entry name" value="Ribosomal_uS10_dom_sf"/>
</dbReference>
<dbReference type="NCBIfam" id="NF001861">
    <property type="entry name" value="PRK00596.1"/>
    <property type="match status" value="1"/>
</dbReference>
<dbReference type="NCBIfam" id="TIGR01049">
    <property type="entry name" value="rpsJ_bact"/>
    <property type="match status" value="1"/>
</dbReference>
<dbReference type="PANTHER" id="PTHR11700">
    <property type="entry name" value="30S RIBOSOMAL PROTEIN S10 FAMILY MEMBER"/>
    <property type="match status" value="1"/>
</dbReference>
<dbReference type="Pfam" id="PF00338">
    <property type="entry name" value="Ribosomal_S10"/>
    <property type="match status" value="1"/>
</dbReference>
<dbReference type="PRINTS" id="PR00971">
    <property type="entry name" value="RIBOSOMALS10"/>
</dbReference>
<dbReference type="SMART" id="SM01403">
    <property type="entry name" value="Ribosomal_S10"/>
    <property type="match status" value="1"/>
</dbReference>
<dbReference type="SUPFAM" id="SSF54999">
    <property type="entry name" value="Ribosomal protein S10"/>
    <property type="match status" value="1"/>
</dbReference>
<dbReference type="PROSITE" id="PS00361">
    <property type="entry name" value="RIBOSOMAL_S10"/>
    <property type="match status" value="1"/>
</dbReference>
<keyword id="KW-1185">Reference proteome</keyword>
<keyword id="KW-0687">Ribonucleoprotein</keyword>
<keyword id="KW-0689">Ribosomal protein</keyword>
<evidence type="ECO:0000255" key="1">
    <source>
        <dbReference type="HAMAP-Rule" id="MF_00508"/>
    </source>
</evidence>
<evidence type="ECO:0000305" key="2"/>
<comment type="function">
    <text evidence="1">Involved in the binding of tRNA to the ribosomes.</text>
</comment>
<comment type="subunit">
    <text evidence="1">Part of the 30S ribosomal subunit.</text>
</comment>
<comment type="similarity">
    <text evidence="1">Belongs to the universal ribosomal protein uS10 family.</text>
</comment>
<feature type="chain" id="PRO_1000196296" description="Small ribosomal subunit protein uS10">
    <location>
        <begin position="1"/>
        <end position="102"/>
    </location>
</feature>